<reference key="1">
    <citation type="submission" date="2007-10" db="EMBL/GenBank/DDBJ databases">
        <title>Complete sequence of Salinispora arenicola CNS-205.</title>
        <authorList>
            <consortium name="US DOE Joint Genome Institute"/>
            <person name="Copeland A."/>
            <person name="Lucas S."/>
            <person name="Lapidus A."/>
            <person name="Barry K."/>
            <person name="Glavina del Rio T."/>
            <person name="Dalin E."/>
            <person name="Tice H."/>
            <person name="Pitluck S."/>
            <person name="Foster B."/>
            <person name="Schmutz J."/>
            <person name="Larimer F."/>
            <person name="Land M."/>
            <person name="Hauser L."/>
            <person name="Kyrpides N."/>
            <person name="Ivanova N."/>
            <person name="Jensen P.R."/>
            <person name="Moore B.S."/>
            <person name="Penn K."/>
            <person name="Jenkins C."/>
            <person name="Udwary D."/>
            <person name="Xiang L."/>
            <person name="Gontang E."/>
            <person name="Richardson P."/>
        </authorList>
    </citation>
    <scope>NUCLEOTIDE SEQUENCE [LARGE SCALE GENOMIC DNA]</scope>
    <source>
        <strain>CNS-205</strain>
    </source>
</reference>
<reference evidence="4" key="2">
    <citation type="journal article" date="2008" name="J. Am. Chem. Soc.">
        <title>Biosynthesis and structures of cyclomarins and cyclomarazines, prenylated cyclic peptides of marine actinobacterial origin.</title>
        <authorList>
            <person name="Schultz A.W."/>
            <person name="Oh D.C."/>
            <person name="Carney J.R."/>
            <person name="Williamson R.T."/>
            <person name="Udwary D.W."/>
            <person name="Jensen P.R."/>
            <person name="Gould S.J."/>
            <person name="Fenical W."/>
            <person name="Moore B.S."/>
        </authorList>
    </citation>
    <scope>FUNCTION</scope>
    <scope>DISRUPTION PHENOTYPE</scope>
</reference>
<dbReference type="EC" id="1.14.-.-" evidence="2"/>
<dbReference type="EMBL" id="CP000850">
    <property type="protein sequence ID" value="ABW00329.1"/>
    <property type="molecule type" value="Genomic_DNA"/>
</dbReference>
<dbReference type="STRING" id="391037.Sare_4560"/>
<dbReference type="KEGG" id="saq:Sare_4560"/>
<dbReference type="PATRIC" id="fig|391037.6.peg.4608"/>
<dbReference type="eggNOG" id="COG2124">
    <property type="taxonomic scope" value="Bacteria"/>
</dbReference>
<dbReference type="HOGENOM" id="CLU_033716_0_2_11"/>
<dbReference type="GO" id="GO:0020037">
    <property type="term" value="F:heme binding"/>
    <property type="evidence" value="ECO:0007669"/>
    <property type="project" value="InterPro"/>
</dbReference>
<dbReference type="GO" id="GO:0005506">
    <property type="term" value="F:iron ion binding"/>
    <property type="evidence" value="ECO:0007669"/>
    <property type="project" value="InterPro"/>
</dbReference>
<dbReference type="GO" id="GO:0004497">
    <property type="term" value="F:monooxygenase activity"/>
    <property type="evidence" value="ECO:0007669"/>
    <property type="project" value="UniProtKB-KW"/>
</dbReference>
<dbReference type="GO" id="GO:0016705">
    <property type="term" value="F:oxidoreductase activity, acting on paired donors, with incorporation or reduction of molecular oxygen"/>
    <property type="evidence" value="ECO:0007669"/>
    <property type="project" value="InterPro"/>
</dbReference>
<dbReference type="CDD" id="cd11032">
    <property type="entry name" value="P450_EryK-like"/>
    <property type="match status" value="1"/>
</dbReference>
<dbReference type="FunFam" id="1.10.630.10:FF:000018">
    <property type="entry name" value="Cytochrome P450 monooxygenase"/>
    <property type="match status" value="1"/>
</dbReference>
<dbReference type="Gene3D" id="1.10.630.10">
    <property type="entry name" value="Cytochrome P450"/>
    <property type="match status" value="1"/>
</dbReference>
<dbReference type="InterPro" id="IPR001128">
    <property type="entry name" value="Cyt_P450"/>
</dbReference>
<dbReference type="InterPro" id="IPR002397">
    <property type="entry name" value="Cyt_P450_B"/>
</dbReference>
<dbReference type="InterPro" id="IPR017972">
    <property type="entry name" value="Cyt_P450_CS"/>
</dbReference>
<dbReference type="InterPro" id="IPR036396">
    <property type="entry name" value="Cyt_P450_sf"/>
</dbReference>
<dbReference type="PANTHER" id="PTHR46696">
    <property type="entry name" value="P450, PUTATIVE (EUROFUNG)-RELATED"/>
    <property type="match status" value="1"/>
</dbReference>
<dbReference type="PANTHER" id="PTHR46696:SF3">
    <property type="entry name" value="PULCHERRIMINIC ACID SYNTHASE"/>
    <property type="match status" value="1"/>
</dbReference>
<dbReference type="Pfam" id="PF00067">
    <property type="entry name" value="p450"/>
    <property type="match status" value="2"/>
</dbReference>
<dbReference type="PRINTS" id="PR00359">
    <property type="entry name" value="BP450"/>
</dbReference>
<dbReference type="PRINTS" id="PR00385">
    <property type="entry name" value="P450"/>
</dbReference>
<dbReference type="SUPFAM" id="SSF48264">
    <property type="entry name" value="Cytochrome P450"/>
    <property type="match status" value="1"/>
</dbReference>
<dbReference type="PROSITE" id="PS00086">
    <property type="entry name" value="CYTOCHROME_P450"/>
    <property type="match status" value="1"/>
</dbReference>
<comment type="function">
    <text evidence="2">Cytochrome P450; part of the gene cluster that mediates the biosynthesis of cyclic heptapeptides, known as cyclomarins and also of cyclic dipeptides, called cyclomarazines, which have both antimicrobial and cytotoxic effects (PubMed:18331040). First, CymD catalyzes the reverse N-prenylation of monomeric L-tryptophan with dimethylallyl diphosphate (DMAPP) to form N-(1,1-dimethylallyl)-tryptophan (r-N-DMAT) (PubMed:18331040). The N-(1,1-dimethylallyl)-tryptophan produced by CymD is then combined with a range of standard and nonproteinogenic amino acid substrates to synthesize the peptides, a process that is probably catalyzed by the non-canonical nonribosomal peptide synthetase (NRPS), CymA (PubMed:18331040). Other proteins in the cluster catalyze further modifications of the peptides including CymV which catalyzes the oxidation of olefinic cyclomarins and cyclomarazines to their respective epoxide derivatives (PubMed:18331040).</text>
</comment>
<comment type="disruption phenotype">
    <text evidence="2">Abolishes the production of epoxide cyclomarin A, leading to the accumulation of the olefinic cyclomarin C.</text>
</comment>
<comment type="similarity">
    <text evidence="1">Belongs to the cytochrome P450 family.</text>
</comment>
<name>CYMV_SALAI</name>
<keyword id="KW-0349">Heme</keyword>
<keyword id="KW-0408">Iron</keyword>
<keyword id="KW-0479">Metal-binding</keyword>
<keyword id="KW-0503">Monooxygenase</keyword>
<keyword id="KW-0560">Oxidoreductase</keyword>
<sequence>MGTAPAYSLDGGRSLHRWLRDMREHHPVHRELLTRVWTLYRYRDITQATADPAVFSSELWRYLPGDRGDDALTAGNLTAMDPPRHRLVRDLVSRSFTARAVGALRPRIAAIAAELIGAVADRGEMDVVADLSDPLPVLVIGELLGLPMADRELLSDWARRLLSFDKGDLTDEVVRKRVADTQQELLDYLRVHCRRRRTNPQDDLISRLIRAEVDGQRLTEDEVVNFANLLLLAGHVTTTLLLANIVLTLDEHPAVAAEARADRGLIPGLIEETLRYRPVIVSNMRVTTRAVTVGTEQLPAGQLVSLSFISGNRDEQYFTDPDRFDIHRDARKHLGFGHGIHYCLGAPLARLELGIALDAMFDRFSRIEVTGVPVDYYDTPGVAGPRSLRIAFRHH</sequence>
<accession>A8M6W1</accession>
<protein>
    <recommendedName>
        <fullName evidence="3">Cyclomarin C epoxidase CymV</fullName>
    </recommendedName>
    <alternativeName>
        <fullName evidence="5">Cytochrome P450</fullName>
        <ecNumber evidence="2">1.14.-.-</ecNumber>
    </alternativeName>
</protein>
<gene>
    <name evidence="3" type="primary">cymV</name>
    <name evidence="5" type="ordered locus">Sare_4560</name>
</gene>
<evidence type="ECO:0000255" key="1">
    <source>
        <dbReference type="RuleBase" id="RU000461"/>
    </source>
</evidence>
<evidence type="ECO:0000269" key="2">
    <source>
    </source>
</evidence>
<evidence type="ECO:0000303" key="3">
    <source>
    </source>
</evidence>
<evidence type="ECO:0000305" key="4"/>
<evidence type="ECO:0000312" key="5">
    <source>
        <dbReference type="EMBL" id="ABW00329.1"/>
    </source>
</evidence>
<feature type="chain" id="PRO_0000462574" description="Cyclomarin C epoxidase CymV">
    <location>
        <begin position="1"/>
        <end position="395"/>
    </location>
</feature>
<proteinExistence type="inferred from homology"/>
<organism>
    <name type="scientific">Salinispora arenicola (strain CNS-205)</name>
    <dbReference type="NCBI Taxonomy" id="391037"/>
    <lineage>
        <taxon>Bacteria</taxon>
        <taxon>Bacillati</taxon>
        <taxon>Actinomycetota</taxon>
        <taxon>Actinomycetes</taxon>
        <taxon>Micromonosporales</taxon>
        <taxon>Micromonosporaceae</taxon>
        <taxon>Salinispora</taxon>
    </lineage>
</organism>